<protein>
    <recommendedName>
        <fullName evidence="1">Dihydroorotate dehydrogenase (quinone)</fullName>
        <ecNumber evidence="1">1.3.5.2</ecNumber>
    </recommendedName>
    <alternativeName>
        <fullName evidence="1">DHOdehase</fullName>
        <shortName evidence="1">DHOD</shortName>
        <shortName evidence="1">DHODase</shortName>
    </alternativeName>
    <alternativeName>
        <fullName evidence="1">Dihydroorotate oxidase</fullName>
    </alternativeName>
</protein>
<comment type="function">
    <text evidence="1">Catalyzes the conversion of dihydroorotate to orotate with quinone as electron acceptor.</text>
</comment>
<comment type="catalytic activity">
    <reaction evidence="1">
        <text>(S)-dihydroorotate + a quinone = orotate + a quinol</text>
        <dbReference type="Rhea" id="RHEA:30187"/>
        <dbReference type="ChEBI" id="CHEBI:24646"/>
        <dbReference type="ChEBI" id="CHEBI:30839"/>
        <dbReference type="ChEBI" id="CHEBI:30864"/>
        <dbReference type="ChEBI" id="CHEBI:132124"/>
        <dbReference type="EC" id="1.3.5.2"/>
    </reaction>
</comment>
<comment type="cofactor">
    <cofactor evidence="1">
        <name>FMN</name>
        <dbReference type="ChEBI" id="CHEBI:58210"/>
    </cofactor>
    <text evidence="1">Binds 1 FMN per subunit.</text>
</comment>
<comment type="pathway">
    <text evidence="1">Pyrimidine metabolism; UMP biosynthesis via de novo pathway; orotate from (S)-dihydroorotate (quinone route): step 1/1.</text>
</comment>
<comment type="subunit">
    <text evidence="1">Monomer.</text>
</comment>
<comment type="subcellular location">
    <subcellularLocation>
        <location evidence="1">Cell membrane</location>
        <topology evidence="1">Peripheral membrane protein</topology>
    </subcellularLocation>
</comment>
<comment type="similarity">
    <text evidence="1">Belongs to the dihydroorotate dehydrogenase family. Type 2 subfamily.</text>
</comment>
<keyword id="KW-1003">Cell membrane</keyword>
<keyword id="KW-0285">Flavoprotein</keyword>
<keyword id="KW-0288">FMN</keyword>
<keyword id="KW-0472">Membrane</keyword>
<keyword id="KW-0560">Oxidoreductase</keyword>
<keyword id="KW-0665">Pyrimidine biosynthesis</keyword>
<organism>
    <name type="scientific">Shewanella sp. (strain W3-18-1)</name>
    <dbReference type="NCBI Taxonomy" id="351745"/>
    <lineage>
        <taxon>Bacteria</taxon>
        <taxon>Pseudomonadati</taxon>
        <taxon>Pseudomonadota</taxon>
        <taxon>Gammaproteobacteria</taxon>
        <taxon>Alteromonadales</taxon>
        <taxon>Shewanellaceae</taxon>
        <taxon>Shewanella</taxon>
    </lineage>
</organism>
<name>PYRD_SHESW</name>
<feature type="chain" id="PRO_1000024229" description="Dihydroorotate dehydrogenase (quinone)">
    <location>
        <begin position="1"/>
        <end position="339"/>
    </location>
</feature>
<feature type="active site" description="Nucleophile" evidence="1">
    <location>
        <position position="175"/>
    </location>
</feature>
<feature type="binding site" evidence="1">
    <location>
        <begin position="62"/>
        <end position="66"/>
    </location>
    <ligand>
        <name>FMN</name>
        <dbReference type="ChEBI" id="CHEBI:58210"/>
    </ligand>
</feature>
<feature type="binding site" evidence="1">
    <location>
        <position position="66"/>
    </location>
    <ligand>
        <name>substrate</name>
    </ligand>
</feature>
<feature type="binding site" evidence="1">
    <location>
        <position position="86"/>
    </location>
    <ligand>
        <name>FMN</name>
        <dbReference type="ChEBI" id="CHEBI:58210"/>
    </ligand>
</feature>
<feature type="binding site" evidence="1">
    <location>
        <begin position="111"/>
        <end position="115"/>
    </location>
    <ligand>
        <name>substrate</name>
    </ligand>
</feature>
<feature type="binding site" evidence="1">
    <location>
        <position position="139"/>
    </location>
    <ligand>
        <name>FMN</name>
        <dbReference type="ChEBI" id="CHEBI:58210"/>
    </ligand>
</feature>
<feature type="binding site" evidence="1">
    <location>
        <position position="172"/>
    </location>
    <ligand>
        <name>FMN</name>
        <dbReference type="ChEBI" id="CHEBI:58210"/>
    </ligand>
</feature>
<feature type="binding site" evidence="1">
    <location>
        <position position="172"/>
    </location>
    <ligand>
        <name>substrate</name>
    </ligand>
</feature>
<feature type="binding site" evidence="1">
    <location>
        <position position="177"/>
    </location>
    <ligand>
        <name>substrate</name>
    </ligand>
</feature>
<feature type="binding site" evidence="1">
    <location>
        <position position="217"/>
    </location>
    <ligand>
        <name>FMN</name>
        <dbReference type="ChEBI" id="CHEBI:58210"/>
    </ligand>
</feature>
<feature type="binding site" evidence="1">
    <location>
        <position position="245"/>
    </location>
    <ligand>
        <name>FMN</name>
        <dbReference type="ChEBI" id="CHEBI:58210"/>
    </ligand>
</feature>
<feature type="binding site" evidence="1">
    <location>
        <begin position="246"/>
        <end position="247"/>
    </location>
    <ligand>
        <name>substrate</name>
    </ligand>
</feature>
<feature type="binding site" evidence="1">
    <location>
        <position position="268"/>
    </location>
    <ligand>
        <name>FMN</name>
        <dbReference type="ChEBI" id="CHEBI:58210"/>
    </ligand>
</feature>
<feature type="binding site" evidence="1">
    <location>
        <position position="297"/>
    </location>
    <ligand>
        <name>FMN</name>
        <dbReference type="ChEBI" id="CHEBI:58210"/>
    </ligand>
</feature>
<feature type="binding site" evidence="1">
    <location>
        <begin position="318"/>
        <end position="319"/>
    </location>
    <ligand>
        <name>FMN</name>
        <dbReference type="ChEBI" id="CHEBI:58210"/>
    </ligand>
</feature>
<dbReference type="EC" id="1.3.5.2" evidence="1"/>
<dbReference type="EMBL" id="CP000503">
    <property type="protein sequence ID" value="ABM24651.1"/>
    <property type="molecule type" value="Genomic_DNA"/>
</dbReference>
<dbReference type="RefSeq" id="WP_011789147.1">
    <property type="nucleotide sequence ID" value="NC_008750.1"/>
</dbReference>
<dbReference type="SMR" id="A1RJ06"/>
<dbReference type="KEGG" id="shw:Sputw3181_1815"/>
<dbReference type="HOGENOM" id="CLU_013640_2_0_6"/>
<dbReference type="UniPathway" id="UPA00070">
    <property type="reaction ID" value="UER00946"/>
</dbReference>
<dbReference type="Proteomes" id="UP000002597">
    <property type="component" value="Chromosome"/>
</dbReference>
<dbReference type="GO" id="GO:0005737">
    <property type="term" value="C:cytoplasm"/>
    <property type="evidence" value="ECO:0007669"/>
    <property type="project" value="InterPro"/>
</dbReference>
<dbReference type="GO" id="GO:0005886">
    <property type="term" value="C:plasma membrane"/>
    <property type="evidence" value="ECO:0007669"/>
    <property type="project" value="UniProtKB-SubCell"/>
</dbReference>
<dbReference type="GO" id="GO:0106430">
    <property type="term" value="F:dihydroorotate dehydrogenase (quinone) activity"/>
    <property type="evidence" value="ECO:0007669"/>
    <property type="project" value="UniProtKB-EC"/>
</dbReference>
<dbReference type="GO" id="GO:0006207">
    <property type="term" value="P:'de novo' pyrimidine nucleobase biosynthetic process"/>
    <property type="evidence" value="ECO:0007669"/>
    <property type="project" value="InterPro"/>
</dbReference>
<dbReference type="GO" id="GO:0044205">
    <property type="term" value="P:'de novo' UMP biosynthetic process"/>
    <property type="evidence" value="ECO:0007669"/>
    <property type="project" value="UniProtKB-UniRule"/>
</dbReference>
<dbReference type="CDD" id="cd04738">
    <property type="entry name" value="DHOD_2_like"/>
    <property type="match status" value="1"/>
</dbReference>
<dbReference type="FunFam" id="3.20.20.70:FF:000028">
    <property type="entry name" value="Dihydroorotate dehydrogenase (quinone)"/>
    <property type="match status" value="1"/>
</dbReference>
<dbReference type="Gene3D" id="3.20.20.70">
    <property type="entry name" value="Aldolase class I"/>
    <property type="match status" value="1"/>
</dbReference>
<dbReference type="HAMAP" id="MF_00225">
    <property type="entry name" value="DHO_dh_type2"/>
    <property type="match status" value="1"/>
</dbReference>
<dbReference type="InterPro" id="IPR013785">
    <property type="entry name" value="Aldolase_TIM"/>
</dbReference>
<dbReference type="InterPro" id="IPR050074">
    <property type="entry name" value="DHO_dehydrogenase"/>
</dbReference>
<dbReference type="InterPro" id="IPR012135">
    <property type="entry name" value="Dihydroorotate_DH_1_2"/>
</dbReference>
<dbReference type="InterPro" id="IPR005719">
    <property type="entry name" value="Dihydroorotate_DH_2"/>
</dbReference>
<dbReference type="InterPro" id="IPR005720">
    <property type="entry name" value="Dihydroorotate_DH_cat"/>
</dbReference>
<dbReference type="InterPro" id="IPR001295">
    <property type="entry name" value="Dihydroorotate_DH_CS"/>
</dbReference>
<dbReference type="NCBIfam" id="NF003644">
    <property type="entry name" value="PRK05286.1-1"/>
    <property type="match status" value="1"/>
</dbReference>
<dbReference type="NCBIfam" id="NF003645">
    <property type="entry name" value="PRK05286.1-2"/>
    <property type="match status" value="1"/>
</dbReference>
<dbReference type="NCBIfam" id="NF003646">
    <property type="entry name" value="PRK05286.1-4"/>
    <property type="match status" value="1"/>
</dbReference>
<dbReference type="NCBIfam" id="NF003652">
    <property type="entry name" value="PRK05286.2-5"/>
    <property type="match status" value="1"/>
</dbReference>
<dbReference type="NCBIfam" id="TIGR01036">
    <property type="entry name" value="pyrD_sub2"/>
    <property type="match status" value="1"/>
</dbReference>
<dbReference type="PANTHER" id="PTHR48109:SF4">
    <property type="entry name" value="DIHYDROOROTATE DEHYDROGENASE (QUINONE), MITOCHONDRIAL"/>
    <property type="match status" value="1"/>
</dbReference>
<dbReference type="PANTHER" id="PTHR48109">
    <property type="entry name" value="DIHYDROOROTATE DEHYDROGENASE (QUINONE), MITOCHONDRIAL-RELATED"/>
    <property type="match status" value="1"/>
</dbReference>
<dbReference type="Pfam" id="PF01180">
    <property type="entry name" value="DHO_dh"/>
    <property type="match status" value="1"/>
</dbReference>
<dbReference type="PIRSF" id="PIRSF000164">
    <property type="entry name" value="DHO_oxidase"/>
    <property type="match status" value="1"/>
</dbReference>
<dbReference type="SUPFAM" id="SSF51395">
    <property type="entry name" value="FMN-linked oxidoreductases"/>
    <property type="match status" value="1"/>
</dbReference>
<dbReference type="PROSITE" id="PS00911">
    <property type="entry name" value="DHODEHASE_1"/>
    <property type="match status" value="1"/>
</dbReference>
<dbReference type="PROSITE" id="PS00912">
    <property type="entry name" value="DHODEHASE_2"/>
    <property type="match status" value="1"/>
</dbReference>
<accession>A1RJ06</accession>
<reference key="1">
    <citation type="submission" date="2006-12" db="EMBL/GenBank/DDBJ databases">
        <title>Complete sequence of Shewanella sp. W3-18-1.</title>
        <authorList>
            <consortium name="US DOE Joint Genome Institute"/>
            <person name="Copeland A."/>
            <person name="Lucas S."/>
            <person name="Lapidus A."/>
            <person name="Barry K."/>
            <person name="Detter J.C."/>
            <person name="Glavina del Rio T."/>
            <person name="Hammon N."/>
            <person name="Israni S."/>
            <person name="Dalin E."/>
            <person name="Tice H."/>
            <person name="Pitluck S."/>
            <person name="Chain P."/>
            <person name="Malfatti S."/>
            <person name="Shin M."/>
            <person name="Vergez L."/>
            <person name="Schmutz J."/>
            <person name="Larimer F."/>
            <person name="Land M."/>
            <person name="Hauser L."/>
            <person name="Kyrpides N."/>
            <person name="Lykidis A."/>
            <person name="Tiedje J."/>
            <person name="Richardson P."/>
        </authorList>
    </citation>
    <scope>NUCLEOTIDE SEQUENCE [LARGE SCALE GENOMIC DNA]</scope>
    <source>
        <strain>W3-18-1</strain>
    </source>
</reference>
<evidence type="ECO:0000255" key="1">
    <source>
        <dbReference type="HAMAP-Rule" id="MF_00225"/>
    </source>
</evidence>
<proteinExistence type="inferred from homology"/>
<sequence length="339" mass="36726">MFYKIAQKVMFQMDPERAHNLAIGSLKMTGNSPLNCFYRQTIAPAPVTFMGLTFPNPVGLAAGMDKDGESIDAFHAMGFGHIEVGTVTPRPQPGNDLPRLFRLKPAKGIINRMGFNNKGVDNLVRNLIAKKSDIMVGVNIGKNKDTPVEQGKDDYLICMDKVYPYAAYIAVNISSPNTPGLRSLQYGDLLDELLSAIKTKQLELAEKHKKYVPIALKIAPDLTIEEIENIADALIKNKFDGAIATNTTLTRDGVSGLANANESGGLSGKPLTELSTKVIRQLAACLKGQIPIIGVGGINSAEDALAKFDAGATMVQIYSGFIYQGPKLIKEIVEAYRLK</sequence>
<gene>
    <name evidence="1" type="primary">pyrD</name>
    <name type="ordered locus">Sputw3181_1815</name>
</gene>